<keyword id="KW-0349">Heme</keyword>
<keyword id="KW-0376">Hydrogen peroxide</keyword>
<keyword id="KW-0408">Iron</keyword>
<keyword id="KW-0479">Metal-binding</keyword>
<keyword id="KW-0560">Oxidoreductase</keyword>
<keyword id="KW-0575">Peroxidase</keyword>
<keyword id="KW-1185">Reference proteome</keyword>
<gene>
    <name evidence="1" type="primary">katG</name>
    <name type="ordered locus">Mhun_2433</name>
</gene>
<name>KATG_METHJ</name>
<organism>
    <name type="scientific">Methanospirillum hungatei JF-1 (strain ATCC 27890 / DSM 864 / NBRC 100397 / JF-1)</name>
    <dbReference type="NCBI Taxonomy" id="323259"/>
    <lineage>
        <taxon>Archaea</taxon>
        <taxon>Methanobacteriati</taxon>
        <taxon>Methanobacteriota</taxon>
        <taxon>Stenosarchaea group</taxon>
        <taxon>Methanomicrobia</taxon>
        <taxon>Methanomicrobiales</taxon>
        <taxon>Methanospirillaceae</taxon>
        <taxon>Methanospirillum</taxon>
    </lineage>
</organism>
<accession>Q2FSF4</accession>
<feature type="chain" id="PRO_0000354969" description="Catalase-peroxidase">
    <location>
        <begin position="1"/>
        <end position="732"/>
    </location>
</feature>
<feature type="region of interest" description="Disordered" evidence="2">
    <location>
        <begin position="1"/>
        <end position="26"/>
    </location>
</feature>
<feature type="region of interest" description="Disordered" evidence="2">
    <location>
        <begin position="344"/>
        <end position="365"/>
    </location>
</feature>
<feature type="active site" description="Proton acceptor" evidence="1">
    <location>
        <position position="97"/>
    </location>
</feature>
<feature type="binding site" description="axial binding residue" evidence="1">
    <location>
        <position position="260"/>
    </location>
    <ligand>
        <name>heme b</name>
        <dbReference type="ChEBI" id="CHEBI:60344"/>
    </ligand>
    <ligandPart>
        <name>Fe</name>
        <dbReference type="ChEBI" id="CHEBI:18248"/>
    </ligandPart>
</feature>
<feature type="site" description="Transition state stabilizer" evidence="1">
    <location>
        <position position="93"/>
    </location>
</feature>
<feature type="cross-link" description="Tryptophyl-tyrosyl-methioninium (Trp-Tyr) (with M-245)" evidence="1">
    <location>
        <begin position="96"/>
        <end position="219"/>
    </location>
</feature>
<feature type="cross-link" description="Tryptophyl-tyrosyl-methioninium (Tyr-Met) (with W-96)" evidence="1">
    <location>
        <begin position="219"/>
        <end position="245"/>
    </location>
</feature>
<proteinExistence type="inferred from homology"/>
<protein>
    <recommendedName>
        <fullName evidence="1">Catalase-peroxidase</fullName>
        <shortName evidence="1">CP</shortName>
        <ecNumber evidence="1">1.11.1.21</ecNumber>
    </recommendedName>
    <alternativeName>
        <fullName evidence="1">Peroxidase/catalase</fullName>
    </alternativeName>
</protein>
<dbReference type="EC" id="1.11.1.21" evidence="1"/>
<dbReference type="EMBL" id="CP000254">
    <property type="protein sequence ID" value="ABD42134.1"/>
    <property type="status" value="ALT_INIT"/>
    <property type="molecule type" value="Genomic_DNA"/>
</dbReference>
<dbReference type="RefSeq" id="WP_048067526.1">
    <property type="nucleotide sequence ID" value="NC_007796.1"/>
</dbReference>
<dbReference type="SMR" id="Q2FSF4"/>
<dbReference type="STRING" id="323259.Mhun_2433"/>
<dbReference type="PeroxiBase" id="2516">
    <property type="entry name" value="MhCP01"/>
</dbReference>
<dbReference type="EnsemblBacteria" id="ABD42134">
    <property type="protein sequence ID" value="ABD42134"/>
    <property type="gene ID" value="Mhun_2433"/>
</dbReference>
<dbReference type="GeneID" id="3922420"/>
<dbReference type="KEGG" id="mhu:Mhun_2433"/>
<dbReference type="eggNOG" id="arCOG04487">
    <property type="taxonomic scope" value="Archaea"/>
</dbReference>
<dbReference type="HOGENOM" id="CLU_025424_2_0_2"/>
<dbReference type="InParanoid" id="Q2FSF4"/>
<dbReference type="OrthoDB" id="358790at2157"/>
<dbReference type="Proteomes" id="UP000001941">
    <property type="component" value="Chromosome"/>
</dbReference>
<dbReference type="GO" id="GO:0005829">
    <property type="term" value="C:cytosol"/>
    <property type="evidence" value="ECO:0007669"/>
    <property type="project" value="TreeGrafter"/>
</dbReference>
<dbReference type="GO" id="GO:0004096">
    <property type="term" value="F:catalase activity"/>
    <property type="evidence" value="ECO:0007669"/>
    <property type="project" value="UniProtKB-UniRule"/>
</dbReference>
<dbReference type="GO" id="GO:0020037">
    <property type="term" value="F:heme binding"/>
    <property type="evidence" value="ECO:0007669"/>
    <property type="project" value="InterPro"/>
</dbReference>
<dbReference type="GO" id="GO:0046872">
    <property type="term" value="F:metal ion binding"/>
    <property type="evidence" value="ECO:0007669"/>
    <property type="project" value="UniProtKB-KW"/>
</dbReference>
<dbReference type="GO" id="GO:0070301">
    <property type="term" value="P:cellular response to hydrogen peroxide"/>
    <property type="evidence" value="ECO:0007669"/>
    <property type="project" value="TreeGrafter"/>
</dbReference>
<dbReference type="GO" id="GO:0042744">
    <property type="term" value="P:hydrogen peroxide catabolic process"/>
    <property type="evidence" value="ECO:0007669"/>
    <property type="project" value="UniProtKB-KW"/>
</dbReference>
<dbReference type="CDD" id="cd00649">
    <property type="entry name" value="catalase_peroxidase_1"/>
    <property type="match status" value="1"/>
</dbReference>
<dbReference type="CDD" id="cd08200">
    <property type="entry name" value="catalase_peroxidase_2"/>
    <property type="match status" value="1"/>
</dbReference>
<dbReference type="FunFam" id="1.10.420.10:FF:000002">
    <property type="entry name" value="Catalase-peroxidase"/>
    <property type="match status" value="1"/>
</dbReference>
<dbReference type="FunFam" id="1.10.420.10:FF:000004">
    <property type="entry name" value="Catalase-peroxidase"/>
    <property type="match status" value="1"/>
</dbReference>
<dbReference type="FunFam" id="1.10.520.10:FF:000002">
    <property type="entry name" value="Catalase-peroxidase"/>
    <property type="match status" value="1"/>
</dbReference>
<dbReference type="FunFam" id="1.10.520.10:FF:000004">
    <property type="entry name" value="Catalase-peroxidase"/>
    <property type="match status" value="1"/>
</dbReference>
<dbReference type="Gene3D" id="1.10.520.10">
    <property type="match status" value="2"/>
</dbReference>
<dbReference type="Gene3D" id="1.10.420.10">
    <property type="entry name" value="Peroxidase, domain 2"/>
    <property type="match status" value="2"/>
</dbReference>
<dbReference type="HAMAP" id="MF_01961">
    <property type="entry name" value="Catal_peroxid"/>
    <property type="match status" value="1"/>
</dbReference>
<dbReference type="InterPro" id="IPR000763">
    <property type="entry name" value="Catalase_peroxidase"/>
</dbReference>
<dbReference type="InterPro" id="IPR002016">
    <property type="entry name" value="Haem_peroxidase"/>
</dbReference>
<dbReference type="InterPro" id="IPR010255">
    <property type="entry name" value="Haem_peroxidase_sf"/>
</dbReference>
<dbReference type="InterPro" id="IPR019794">
    <property type="entry name" value="Peroxidases_AS"/>
</dbReference>
<dbReference type="InterPro" id="IPR019793">
    <property type="entry name" value="Peroxidases_heam-ligand_BS"/>
</dbReference>
<dbReference type="NCBIfam" id="TIGR00198">
    <property type="entry name" value="cat_per_HPI"/>
    <property type="match status" value="1"/>
</dbReference>
<dbReference type="NCBIfam" id="NF011635">
    <property type="entry name" value="PRK15061.1"/>
    <property type="match status" value="1"/>
</dbReference>
<dbReference type="PANTHER" id="PTHR30555:SF0">
    <property type="entry name" value="CATALASE-PEROXIDASE"/>
    <property type="match status" value="1"/>
</dbReference>
<dbReference type="PANTHER" id="PTHR30555">
    <property type="entry name" value="HYDROPEROXIDASE I, BIFUNCTIONAL CATALASE-PEROXIDASE"/>
    <property type="match status" value="1"/>
</dbReference>
<dbReference type="Pfam" id="PF00141">
    <property type="entry name" value="peroxidase"/>
    <property type="match status" value="2"/>
</dbReference>
<dbReference type="PRINTS" id="PR00460">
    <property type="entry name" value="BPEROXIDASE"/>
</dbReference>
<dbReference type="PRINTS" id="PR00458">
    <property type="entry name" value="PEROXIDASE"/>
</dbReference>
<dbReference type="SUPFAM" id="SSF48113">
    <property type="entry name" value="Heme-dependent peroxidases"/>
    <property type="match status" value="2"/>
</dbReference>
<dbReference type="PROSITE" id="PS00435">
    <property type="entry name" value="PEROXIDASE_1"/>
    <property type="match status" value="1"/>
</dbReference>
<dbReference type="PROSITE" id="PS00436">
    <property type="entry name" value="PEROXIDASE_2"/>
    <property type="match status" value="1"/>
</dbReference>
<dbReference type="PROSITE" id="PS50873">
    <property type="entry name" value="PEROXIDASE_4"/>
    <property type="match status" value="1"/>
</dbReference>
<sequence>MADNKKSPETGGITMQIPGKGRTNRDWWPDQLNLKILSQNSPLSNPLGQKFNYRVEFSKLDLAAVKQDLRDLMTSSQDWWPADFGHYGPLFIRMAWHSAGTYRTFDGRGGASGGEQRFPPLNSWPDNVNLDKARRLLWPIKQKYGQKISWADLMILAGNVALESMGFKTFGFGGGREDVWEPQEDTYWGSEDTWLGDKRYSGDRELEKPLAAVQMGLIYVNPEGPDGNPDPVAAARDIREVFARMAMNDEETVALIAGGHAFGKTHGAGPASHLGPEPEAAGIEEQGLGWKNSFGTGKGNDTITSGIEITWTPTPTKWSNNFFRVLFSYEWELTKSPAGAYQWKPKGEAGAGTVPDPHDPKKRHAPGMLTTDLALRFDPIYEKISRRFYENPELFADAFARAWFKLTHRDMGPKTRYLGPEVPDEDLIWQDPIPAINHPLIDDQDIALLKSRILASGLSISRLVYTAWAAASTFRGSDKRGGANGARIRLDPQKNWEVNEPEELANVLKILEGIQHEFNQNAPGGKRVSLADLIVLGGCAGIEQAAKNAGYSVTVPFTPGRMDAVQEQTDAASFAVLEPMADGFRNYAKRHLPMKPEAMLIDKAQLLMLTAPEMTVLIGGMRVLNTNFGQTKHGVFTDKPETLTNDYFVHLLDMGTEWTPVSETEDLYEGRDRRTGEIRWTGTRVDLIFGSNSQLRALAEVYACSDGKDKFIQDFVAAWAKVMNLDRFDRIQ</sequence>
<evidence type="ECO:0000255" key="1">
    <source>
        <dbReference type="HAMAP-Rule" id="MF_01961"/>
    </source>
</evidence>
<evidence type="ECO:0000256" key="2">
    <source>
        <dbReference type="SAM" id="MobiDB-lite"/>
    </source>
</evidence>
<evidence type="ECO:0000305" key="3"/>
<comment type="function">
    <text evidence="1">Bifunctional enzyme with both catalase and broad-spectrum peroxidase activity.</text>
</comment>
<comment type="catalytic activity">
    <reaction evidence="1">
        <text>H2O2 + AH2 = A + 2 H2O</text>
        <dbReference type="Rhea" id="RHEA:30275"/>
        <dbReference type="ChEBI" id="CHEBI:13193"/>
        <dbReference type="ChEBI" id="CHEBI:15377"/>
        <dbReference type="ChEBI" id="CHEBI:16240"/>
        <dbReference type="ChEBI" id="CHEBI:17499"/>
        <dbReference type="EC" id="1.11.1.21"/>
    </reaction>
</comment>
<comment type="catalytic activity">
    <reaction evidence="1">
        <text>2 H2O2 = O2 + 2 H2O</text>
        <dbReference type="Rhea" id="RHEA:20309"/>
        <dbReference type="ChEBI" id="CHEBI:15377"/>
        <dbReference type="ChEBI" id="CHEBI:15379"/>
        <dbReference type="ChEBI" id="CHEBI:16240"/>
        <dbReference type="EC" id="1.11.1.21"/>
    </reaction>
</comment>
<comment type="cofactor">
    <cofactor evidence="1">
        <name>heme b</name>
        <dbReference type="ChEBI" id="CHEBI:60344"/>
    </cofactor>
    <text evidence="1">Binds 1 heme b (iron(II)-protoporphyrin IX) group per dimer.</text>
</comment>
<comment type="subunit">
    <text evidence="1">Homodimer or homotetramer.</text>
</comment>
<comment type="PTM">
    <text evidence="1">Formation of the three residue Trp-Tyr-Met cross-link is important for the catalase, but not the peroxidase activity of the enzyme.</text>
</comment>
<comment type="similarity">
    <text evidence="1">Belongs to the peroxidase family. Peroxidase/catalase subfamily.</text>
</comment>
<comment type="sequence caution" evidence="3">
    <conflict type="erroneous initiation">
        <sequence resource="EMBL-CDS" id="ABD42134"/>
    </conflict>
</comment>
<reference key="1">
    <citation type="journal article" date="2016" name="Stand. Genomic Sci.">
        <title>Complete genome sequence of Methanospirillum hungatei type strain JF1.</title>
        <authorList>
            <person name="Gunsalus R.P."/>
            <person name="Cook L.E."/>
            <person name="Crable B."/>
            <person name="Rohlin L."/>
            <person name="McDonald E."/>
            <person name="Mouttaki H."/>
            <person name="Sieber J.R."/>
            <person name="Poweleit N."/>
            <person name="Zhou H."/>
            <person name="Lapidus A.L."/>
            <person name="Daligault H.E."/>
            <person name="Land M."/>
            <person name="Gilna P."/>
            <person name="Ivanova N."/>
            <person name="Kyrpides N."/>
            <person name="Culley D.E."/>
            <person name="McInerney M.J."/>
        </authorList>
    </citation>
    <scope>NUCLEOTIDE SEQUENCE [LARGE SCALE GENOMIC DNA]</scope>
    <source>
        <strain>ATCC 27890 / DSM 864 / NBRC 100397 / JF-1</strain>
    </source>
</reference>